<dbReference type="EC" id="2.4.1.-" evidence="5"/>
<dbReference type="EC" id="2.4.1.173" evidence="5"/>
<dbReference type="EMBL" id="AF091398">
    <property type="protein sequence ID" value="AAD29571.1"/>
    <property type="molecule type" value="Genomic_DNA"/>
</dbReference>
<dbReference type="EMBL" id="CP017630">
    <property type="protein sequence ID" value="AOW30966.1"/>
    <property type="molecule type" value="Genomic_DNA"/>
</dbReference>
<dbReference type="RefSeq" id="XP_718281.2">
    <property type="nucleotide sequence ID" value="XM_713188.2"/>
</dbReference>
<dbReference type="SMR" id="Q5A950"/>
<dbReference type="FunCoup" id="Q5A950">
    <property type="interactions" value="115"/>
</dbReference>
<dbReference type="STRING" id="237561.Q5A950"/>
<dbReference type="CAZy" id="GT1">
    <property type="family name" value="Glycosyltransferase Family 1"/>
</dbReference>
<dbReference type="EnsemblFungi" id="CR_02160W_A-T">
    <property type="protein sequence ID" value="CR_02160W_A-T-p1"/>
    <property type="gene ID" value="CR_02160W_A"/>
</dbReference>
<dbReference type="GeneID" id="3640147"/>
<dbReference type="KEGG" id="cal:CAALFM_CR02160WA"/>
<dbReference type="CGD" id="CAL0000189652">
    <property type="gene designation" value="UGT51C1"/>
</dbReference>
<dbReference type="VEuPathDB" id="FungiDB:CR_02160W_A"/>
<dbReference type="eggNOG" id="KOG1192">
    <property type="taxonomic scope" value="Eukaryota"/>
</dbReference>
<dbReference type="HOGENOM" id="CLU_000537_6_0_1"/>
<dbReference type="InParanoid" id="Q5A950"/>
<dbReference type="OrthoDB" id="10261837at2759"/>
<dbReference type="BRENDA" id="2.4.1.173">
    <property type="organism ID" value="1096"/>
</dbReference>
<dbReference type="PRO" id="PR:Q5A950"/>
<dbReference type="Proteomes" id="UP000000559">
    <property type="component" value="Chromosome R"/>
</dbReference>
<dbReference type="GO" id="GO:0005737">
    <property type="term" value="C:cytoplasm"/>
    <property type="evidence" value="ECO:0007669"/>
    <property type="project" value="UniProtKB-SubCell"/>
</dbReference>
<dbReference type="GO" id="GO:0016020">
    <property type="term" value="C:membrane"/>
    <property type="evidence" value="ECO:0007669"/>
    <property type="project" value="UniProtKB-SubCell"/>
</dbReference>
<dbReference type="GO" id="GO:0016906">
    <property type="term" value="F:sterol 3-beta-glucosyltransferase activity"/>
    <property type="evidence" value="ECO:0000314"/>
    <property type="project" value="CGD"/>
</dbReference>
<dbReference type="GO" id="GO:0008194">
    <property type="term" value="F:UDP-glycosyltransferase activity"/>
    <property type="evidence" value="ECO:0000318"/>
    <property type="project" value="GO_Central"/>
</dbReference>
<dbReference type="GO" id="GO:0005975">
    <property type="term" value="P:carbohydrate metabolic process"/>
    <property type="evidence" value="ECO:0007669"/>
    <property type="project" value="InterPro"/>
</dbReference>
<dbReference type="GO" id="GO:0030259">
    <property type="term" value="P:lipid glycosylation"/>
    <property type="evidence" value="ECO:0007669"/>
    <property type="project" value="InterPro"/>
</dbReference>
<dbReference type="GO" id="GO:0016126">
    <property type="term" value="P:sterol biosynthetic process"/>
    <property type="evidence" value="ECO:0007669"/>
    <property type="project" value="UniProtKB-KW"/>
</dbReference>
<dbReference type="GO" id="GO:0016125">
    <property type="term" value="P:sterol metabolic process"/>
    <property type="evidence" value="ECO:0000318"/>
    <property type="project" value="GO_Central"/>
</dbReference>
<dbReference type="CDD" id="cd03784">
    <property type="entry name" value="GT1_Gtf-like"/>
    <property type="match status" value="1"/>
</dbReference>
<dbReference type="CDD" id="cd13216">
    <property type="entry name" value="PH-GRAM2_AGT26"/>
    <property type="match status" value="1"/>
</dbReference>
<dbReference type="FunFam" id="2.30.29.30:FF:000303">
    <property type="entry name" value="Sterol 3-beta-glucosyltransferase"/>
    <property type="match status" value="1"/>
</dbReference>
<dbReference type="FunFam" id="3.40.50.2000:FF:000029">
    <property type="entry name" value="Sterol 3-beta-glucosyltransferase"/>
    <property type="match status" value="1"/>
</dbReference>
<dbReference type="FunFam" id="3.40.50.2000:FF:000009">
    <property type="entry name" value="Sterol 3-beta-glucosyltransferase UGT80A2"/>
    <property type="match status" value="1"/>
</dbReference>
<dbReference type="Gene3D" id="3.40.50.2000">
    <property type="entry name" value="Glycogen Phosphorylase B"/>
    <property type="match status" value="2"/>
</dbReference>
<dbReference type="Gene3D" id="2.30.29.30">
    <property type="entry name" value="Pleckstrin-homology domain (PH domain)/Phosphotyrosine-binding domain (PTB)"/>
    <property type="match status" value="2"/>
</dbReference>
<dbReference type="InterPro" id="IPR048065">
    <property type="entry name" value="ATG26_PH_GRAM2"/>
</dbReference>
<dbReference type="InterPro" id="IPR010610">
    <property type="entry name" value="EryCIII-like_C"/>
</dbReference>
<dbReference type="InterPro" id="IPR050426">
    <property type="entry name" value="Glycosyltransferase_28"/>
</dbReference>
<dbReference type="InterPro" id="IPR004276">
    <property type="entry name" value="GlycoTrans_28_N"/>
</dbReference>
<dbReference type="InterPro" id="IPR004182">
    <property type="entry name" value="GRAM"/>
</dbReference>
<dbReference type="InterPro" id="IPR011993">
    <property type="entry name" value="PH-like_dom_sf"/>
</dbReference>
<dbReference type="InterPro" id="IPR001849">
    <property type="entry name" value="PH_domain"/>
</dbReference>
<dbReference type="InterPro" id="IPR002213">
    <property type="entry name" value="UDP_glucos_trans"/>
</dbReference>
<dbReference type="PANTHER" id="PTHR48050">
    <property type="entry name" value="STEROL 3-BETA-GLUCOSYLTRANSFERASE"/>
    <property type="match status" value="1"/>
</dbReference>
<dbReference type="PANTHER" id="PTHR48050:SF25">
    <property type="entry name" value="STEROL 3-BETA-GLUCOSYLTRANSFERASE"/>
    <property type="match status" value="1"/>
</dbReference>
<dbReference type="Pfam" id="PF06722">
    <property type="entry name" value="EryCIII-like_C"/>
    <property type="match status" value="1"/>
</dbReference>
<dbReference type="Pfam" id="PF03033">
    <property type="entry name" value="Glyco_transf_28"/>
    <property type="match status" value="1"/>
</dbReference>
<dbReference type="Pfam" id="PF02893">
    <property type="entry name" value="GRAM"/>
    <property type="match status" value="1"/>
</dbReference>
<dbReference type="SMART" id="SM00568">
    <property type="entry name" value="GRAM"/>
    <property type="match status" value="2"/>
</dbReference>
<dbReference type="SMART" id="SM00233">
    <property type="entry name" value="PH"/>
    <property type="match status" value="1"/>
</dbReference>
<dbReference type="SUPFAM" id="SSF50729">
    <property type="entry name" value="PH domain-like"/>
    <property type="match status" value="1"/>
</dbReference>
<dbReference type="SUPFAM" id="SSF53756">
    <property type="entry name" value="UDP-Glycosyltransferase/glycogen phosphorylase"/>
    <property type="match status" value="1"/>
</dbReference>
<dbReference type="PROSITE" id="PS50003">
    <property type="entry name" value="PH_DOMAIN"/>
    <property type="match status" value="1"/>
</dbReference>
<proteinExistence type="evidence at protein level"/>
<reference key="1">
    <citation type="journal article" date="1999" name="J. Biol. Chem.">
        <title>Cloning and functional expression of UGT genes encoding sterol glucosyltransferases from Saccharomyces cerevisiae, Candida albicans, Pichia pastoris, and Dictyostelium discoideum.</title>
        <authorList>
            <person name="Warnecke D.C."/>
            <person name="Erdmann R."/>
            <person name="Fahl A."/>
            <person name="Hube B."/>
            <person name="Mueller F."/>
            <person name="Zank T."/>
            <person name="Zaehringer U."/>
            <person name="Heinz E."/>
        </authorList>
    </citation>
    <scope>NUCLEOTIDE SEQUENCE [GENOMIC DNA]</scope>
    <scope>FUNCTION</scope>
    <scope>CATALYTIC ACTIVITY</scope>
    <source>
        <strain>1161</strain>
    </source>
</reference>
<reference key="2">
    <citation type="journal article" date="2004" name="Proc. Natl. Acad. Sci. U.S.A.">
        <title>The diploid genome sequence of Candida albicans.</title>
        <authorList>
            <person name="Jones T."/>
            <person name="Federspiel N.A."/>
            <person name="Chibana H."/>
            <person name="Dungan J."/>
            <person name="Kalman S."/>
            <person name="Magee B.B."/>
            <person name="Newport G."/>
            <person name="Thorstenson Y.R."/>
            <person name="Agabian N."/>
            <person name="Magee P.T."/>
            <person name="Davis R.W."/>
            <person name="Scherer S."/>
        </authorList>
    </citation>
    <scope>NUCLEOTIDE SEQUENCE [LARGE SCALE GENOMIC DNA]</scope>
    <source>
        <strain>SC5314 / ATCC MYA-2876</strain>
    </source>
</reference>
<reference key="3">
    <citation type="journal article" date="2007" name="Genome Biol.">
        <title>Assembly of the Candida albicans genome into sixteen supercontigs aligned on the eight chromosomes.</title>
        <authorList>
            <person name="van het Hoog M."/>
            <person name="Rast T.J."/>
            <person name="Martchenko M."/>
            <person name="Grindle S."/>
            <person name="Dignard D."/>
            <person name="Hogues H."/>
            <person name="Cuomo C."/>
            <person name="Berriman M."/>
            <person name="Scherer S."/>
            <person name="Magee B.B."/>
            <person name="Whiteway M."/>
            <person name="Chibana H."/>
            <person name="Nantel A."/>
            <person name="Magee P.T."/>
        </authorList>
    </citation>
    <scope>GENOME REANNOTATION</scope>
    <source>
        <strain>SC5314 / ATCC MYA-2876</strain>
    </source>
</reference>
<reference key="4">
    <citation type="journal article" date="2013" name="Genome Biol.">
        <title>Assembly of a phased diploid Candida albicans genome facilitates allele-specific measurements and provides a simple model for repeat and indel structure.</title>
        <authorList>
            <person name="Muzzey D."/>
            <person name="Schwartz K."/>
            <person name="Weissman J.S."/>
            <person name="Sherlock G."/>
        </authorList>
    </citation>
    <scope>NUCLEOTIDE SEQUENCE [LARGE SCALE GENOMIC DNA]</scope>
    <scope>GENOME REANNOTATION</scope>
    <source>
        <strain>SC5314 / ATCC MYA-2876</strain>
    </source>
</reference>
<sequence>MSFYKKVTRGLATPLQGSINLFSGSPNVSGDEGTDADNENPEHRTTYHSLSGRVNHDDDDEDVAKLEDIVGFFTGLLNTTTVCAGLGSLNNLKKHYLDEFIKKSALNPLRPQNYGPETSSKLNNNSIEELLNNGDTSLEKVRKMSLYDFDEHTSDSEEEDSADKEEESIAENLKPGKSGKARNHPRDSRTTATLITTQITRTKTATTATPTPTPTSSVDTDVTDVTEPIGKVTTKIPEEQLQGLNPLQKSVVKNLDPHHVREGVLIKVKNSETPLKNDRQELLEKIQLRLKIADKLQRVFDLSDEDTFCGNYSAWLIKDVLLQGHVYLTKDALLYFAFLPKRFSLENSSEVLDEDNSSSIVYSGNLGLKSAKYGEVVLNTVLQHRYWAVLRAETLSIYSSSTNLYFPVLVIDIKKCLYTEIIDKEKLNREAISPVNRGTYSPNGGLSGTATPRASTLENTASELNSMLSGDSYSPTEDNVETTASTVWFKLVTKKKTYKFSCDSSFSARQWCNNITKLIFQHNNANSNGEVLIKIPISKIAEYNKRALFSEEEEEDRTLDVTMNDIPLNVTIKYLGDNDNERKRDKLKRKYKGEEPTIEEVHFLFPKSGVEFFETFDKLVNPVVSDNDNQSSKSSITSTNFSEKAISTLSKSPNHLVQTVLDFNKPVDDDISAFKKFGTTITSPTRIFKATITSPEMTSIDETSLRDSFDSDRLHLPRDMSERALKNLEVSFVTSLKKLEDASKRYEKPHMEHSQTNLASILSDPSEVKKESKTAISKSIKALYSVGTHWSATPNHYFELGKYYVNKVQDRDSSQRNFQSHFSTNSKLLASYYGHLLRTVPVYGKIYVSETDVCFRSLLPGVSTKMVLPMTDIEEVRASRGSRLTYHGLRLIVRGSEELDLEFGSSKSRDDFQKVVLSVLERLHSKEGFRPEPYQWGSNFEVELYKTRMEYSDSENREIQQYDNSIDIKFAEKKIEMARVRMFEDRLMAASGLDVPIILEDSPFFKTELRPSTSYNITLLTIGSRGDVQPYIALGKGLVKEGHNVTIATHAEFGDWIKTFGLGFKEIAGDPAELMSFMVTHNSMSVGFLKNAQQKFRSWISKLLTTSWEACQGSDILIESPSAMSGIHIAEALGIPYFRAFTMPWTRTRAYPHAFFVPEQKKGGSYNYLTHVLFENIFWKGISGQVNKWRVEELDLPKTNLYRLQQTRVPFLYNVSPAILPPSVDFPDWIKVTGYWFLDEGSGDYKPPEELVQFMKKASRDKKKIVYIGFGSIVVKDAKSLTKAVVSAVRRADVRCILNKGWSDRLDNKDKNEIEIELPPEIYNSGTIPHDWLFPRIDAAVHHGGSGTTGATMRAGIPTIIKPFFGDQFFYATRIEDLGAGIALKKLTAKTLGDALVKATHDLKIIDKAKRVSQQIKHEHGVLSAIESIYSELEYSRNLILIKDIHNQNYKRHHPVPSGVQTPAYDTDSDDYDDDEDDDESDKDDEEEEEENSYDGYDGNGVNNSPSQNSSN</sequence>
<name>ATG26_CANAL</name>
<evidence type="ECO:0000250" key="1">
    <source>
        <dbReference type="UniProtKB" id="Q06321"/>
    </source>
</evidence>
<evidence type="ECO:0000255" key="2"/>
<evidence type="ECO:0000255" key="3">
    <source>
        <dbReference type="PROSITE-ProRule" id="PRU00145"/>
    </source>
</evidence>
<evidence type="ECO:0000256" key="4">
    <source>
        <dbReference type="SAM" id="MobiDB-lite"/>
    </source>
</evidence>
<evidence type="ECO:0000269" key="5">
    <source>
    </source>
</evidence>
<evidence type="ECO:0000305" key="6"/>
<feature type="chain" id="PRO_0000215607" description="Sterol 3-beta-glucosyltransferase">
    <location>
        <begin position="1"/>
        <end position="1512"/>
    </location>
</feature>
<feature type="domain" description="GRAM 1" evidence="2">
    <location>
        <begin position="296"/>
        <end position="331"/>
    </location>
</feature>
<feature type="domain" description="PH" evidence="3">
    <location>
        <begin position="359"/>
        <end position="520"/>
    </location>
</feature>
<feature type="domain" description="GRAM 2" evidence="2">
    <location>
        <begin position="816"/>
        <end position="880"/>
    </location>
</feature>
<feature type="region of interest" description="Disordered" evidence="4">
    <location>
        <begin position="22"/>
        <end position="50"/>
    </location>
</feature>
<feature type="region of interest" description="Disordered" evidence="4">
    <location>
        <begin position="150"/>
        <end position="222"/>
    </location>
</feature>
<feature type="region of interest" description="Disordered" evidence="4">
    <location>
        <begin position="1450"/>
        <end position="1512"/>
    </location>
</feature>
<feature type="compositionally biased region" description="Acidic residues" evidence="4">
    <location>
        <begin position="156"/>
        <end position="169"/>
    </location>
</feature>
<feature type="compositionally biased region" description="Low complexity" evidence="4">
    <location>
        <begin position="190"/>
        <end position="222"/>
    </location>
</feature>
<feature type="compositionally biased region" description="Acidic residues" evidence="4">
    <location>
        <begin position="1467"/>
        <end position="1493"/>
    </location>
</feature>
<feature type="compositionally biased region" description="Polar residues" evidence="4">
    <location>
        <begin position="1501"/>
        <end position="1512"/>
    </location>
</feature>
<feature type="binding site" evidence="1">
    <location>
        <position position="1024"/>
    </location>
    <ligand>
        <name>UDP-alpha-D-glucose</name>
        <dbReference type="ChEBI" id="CHEBI:58885"/>
    </ligand>
</feature>
<feature type="binding site" evidence="1">
    <location>
        <position position="1025"/>
    </location>
    <ligand>
        <name>UDP-alpha-D-glucose</name>
        <dbReference type="ChEBI" id="CHEBI:58885"/>
    </ligand>
</feature>
<feature type="binding site" evidence="1">
    <location>
        <position position="1027"/>
    </location>
    <ligand>
        <name>UDP-alpha-D-glucose</name>
        <dbReference type="ChEBI" id="CHEBI:58885"/>
    </ligand>
</feature>
<feature type="binding site" evidence="1">
    <location>
        <position position="1299"/>
    </location>
    <ligand>
        <name>UDP-alpha-D-glucose</name>
        <dbReference type="ChEBI" id="CHEBI:58885"/>
    </ligand>
</feature>
<feature type="binding site" evidence="1">
    <location>
        <position position="1328"/>
    </location>
    <ligand>
        <name>UDP-alpha-D-glucose</name>
        <dbReference type="ChEBI" id="CHEBI:58885"/>
    </ligand>
</feature>
<feature type="binding site" evidence="1">
    <location>
        <position position="1330"/>
    </location>
    <ligand>
        <name>UDP-alpha-D-glucose</name>
        <dbReference type="ChEBI" id="CHEBI:58885"/>
    </ligand>
</feature>
<feature type="binding site" evidence="1">
    <location>
        <position position="1343"/>
    </location>
    <ligand>
        <name>UDP-alpha-D-glucose</name>
        <dbReference type="ChEBI" id="CHEBI:58885"/>
    </ligand>
</feature>
<feature type="binding site" evidence="1">
    <location>
        <position position="1346"/>
    </location>
    <ligand>
        <name>UDP-alpha-D-glucose</name>
        <dbReference type="ChEBI" id="CHEBI:58885"/>
    </ligand>
</feature>
<feature type="binding site" evidence="1">
    <location>
        <position position="1347"/>
    </location>
    <ligand>
        <name>UDP-alpha-D-glucose</name>
        <dbReference type="ChEBI" id="CHEBI:58885"/>
    </ligand>
</feature>
<feature type="binding site" evidence="1">
    <location>
        <position position="1348"/>
    </location>
    <ligand>
        <name>UDP-alpha-D-glucose</name>
        <dbReference type="ChEBI" id="CHEBI:58885"/>
    </ligand>
</feature>
<feature type="binding site" evidence="1">
    <location>
        <position position="1367"/>
    </location>
    <ligand>
        <name>UDP-alpha-D-glucose</name>
        <dbReference type="ChEBI" id="CHEBI:58885"/>
    </ligand>
</feature>
<feature type="binding site" evidence="1">
    <location>
        <position position="1368"/>
    </location>
    <ligand>
        <name>UDP-alpha-D-glucose</name>
        <dbReference type="ChEBI" id="CHEBI:58885"/>
    </ligand>
</feature>
<feature type="sequence conflict" description="In Ref. 1; AAD29571." evidence="6" ref="1">
    <original>K</original>
    <variation>E</variation>
    <location>
        <position position="164"/>
    </location>
</feature>
<feature type="sequence conflict" description="In Ref. 1; AAD29571." evidence="6" ref="1">
    <original>K</original>
    <variation>RTA</variation>
    <location>
        <position position="203"/>
    </location>
</feature>
<feature type="sequence conflict" description="In Ref. 1; AAD29571." evidence="6" ref="1">
    <original>K</original>
    <variation>E</variation>
    <location>
        <position position="235"/>
    </location>
</feature>
<feature type="sequence conflict" description="In Ref. 1; AAD29571." evidence="6" ref="1">
    <original>V</original>
    <variation>A</variation>
    <location>
        <position position="561"/>
    </location>
</feature>
<feature type="sequence conflict" description="In Ref. 1; AAD29571." evidence="6" ref="1">
    <original>S</original>
    <variation>L</variation>
    <location>
        <position position="625"/>
    </location>
</feature>
<feature type="sequence conflict" description="In Ref. 1; AAD29571." evidence="6" ref="1">
    <original>D</original>
    <variation>E</variation>
    <location>
        <position position="810"/>
    </location>
</feature>
<feature type="sequence conflict" description="In Ref. 1; AAD29571." evidence="6" ref="1">
    <original>A</original>
    <variation>G</variation>
    <location>
        <position position="1130"/>
    </location>
</feature>
<feature type="sequence conflict" description="In Ref. 1; AAD29571." evidence="6" ref="1">
    <original>E</original>
    <variation>EEE</variation>
    <location>
        <position position="1491"/>
    </location>
</feature>
<feature type="sequence conflict" description="In Ref. 1; AAD29571." evidence="6" ref="1">
    <original>P</original>
    <variation>R</variation>
    <location>
        <position position="1506"/>
    </location>
</feature>
<organism>
    <name type="scientific">Candida albicans (strain SC5314 / ATCC MYA-2876)</name>
    <name type="common">Yeast</name>
    <dbReference type="NCBI Taxonomy" id="237561"/>
    <lineage>
        <taxon>Eukaryota</taxon>
        <taxon>Fungi</taxon>
        <taxon>Dikarya</taxon>
        <taxon>Ascomycota</taxon>
        <taxon>Saccharomycotina</taxon>
        <taxon>Pichiomycetes</taxon>
        <taxon>Debaryomycetaceae</taxon>
        <taxon>Candida/Lodderomyces clade</taxon>
        <taxon>Candida</taxon>
    </lineage>
</organism>
<keyword id="KW-0963">Cytoplasm</keyword>
<keyword id="KW-0328">Glycosyltransferase</keyword>
<keyword id="KW-0444">Lipid biosynthesis</keyword>
<keyword id="KW-0443">Lipid metabolism</keyword>
<keyword id="KW-0472">Membrane</keyword>
<keyword id="KW-1185">Reference proteome</keyword>
<keyword id="KW-0677">Repeat</keyword>
<keyword id="KW-0752">Steroid biosynthesis</keyword>
<keyword id="KW-0753">Steroid metabolism</keyword>
<keyword id="KW-0756">Sterol biosynthesis</keyword>
<keyword id="KW-1207">Sterol metabolism</keyword>
<keyword id="KW-0808">Transferase</keyword>
<protein>
    <recommendedName>
        <fullName evidence="6">Sterol 3-beta-glucosyltransferase</fullName>
        <ecNumber evidence="5">2.4.1.-</ecNumber>
        <ecNumber evidence="5">2.4.1.173</ecNumber>
    </recommendedName>
    <alternativeName>
        <fullName evidence="1">Autophagy-related protein 26</fullName>
    </alternativeName>
    <alternativeName>
        <fullName>UDP-glycosyltransferase 51</fullName>
    </alternativeName>
</protein>
<comment type="function">
    <text evidence="5">Sterol glycosyltransferase responsible for the glycosylation of ergosterol to form ergosterol-glucoside.</text>
</comment>
<comment type="catalytic activity">
    <reaction evidence="5">
        <text>a sterol + UDP-alpha-D-glucose = a sterol 3-beta-D-glucoside + UDP + H(+)</text>
        <dbReference type="Rhea" id="RHEA:22724"/>
        <dbReference type="ChEBI" id="CHEBI:15378"/>
        <dbReference type="ChEBI" id="CHEBI:15889"/>
        <dbReference type="ChEBI" id="CHEBI:37424"/>
        <dbReference type="ChEBI" id="CHEBI:58223"/>
        <dbReference type="ChEBI" id="CHEBI:58885"/>
        <dbReference type="EC" id="2.4.1.173"/>
    </reaction>
    <physiologicalReaction direction="left-to-right" evidence="5">
        <dbReference type="Rhea" id="RHEA:22725"/>
    </physiologicalReaction>
</comment>
<comment type="catalytic activity">
    <reaction evidence="5">
        <text>ergosterol + UDP-alpha-D-glucose = ergosteryl 3-beta-D-glucoside + UDP + H(+)</text>
        <dbReference type="Rhea" id="RHEA:61836"/>
        <dbReference type="ChEBI" id="CHEBI:15378"/>
        <dbReference type="ChEBI" id="CHEBI:16933"/>
        <dbReference type="ChEBI" id="CHEBI:52973"/>
        <dbReference type="ChEBI" id="CHEBI:58223"/>
        <dbReference type="ChEBI" id="CHEBI:58885"/>
    </reaction>
    <physiologicalReaction direction="left-to-right" evidence="5">
        <dbReference type="Rhea" id="RHEA:61837"/>
    </physiologicalReaction>
</comment>
<comment type="subcellular location">
    <subcellularLocation>
        <location evidence="1">Cytoplasm</location>
    </subcellularLocation>
    <subcellularLocation>
        <location evidence="1">Membrane</location>
        <topology evidence="1">Peripheral membrane protein</topology>
    </subcellularLocation>
</comment>
<comment type="similarity">
    <text evidence="6">Belongs to the glycosyltransferase 28 family.</text>
</comment>
<gene>
    <name evidence="1" type="primary">ATG26</name>
    <name type="synonym">UGT51</name>
    <name type="synonym">UGT51C</name>
    <name type="synonym">UGT51C1</name>
    <name type="ordered locus">CAALFM_CR02160WA</name>
    <name type="ORF">CaO19.10147</name>
    <name type="ORF">CaO19.2616</name>
</gene>
<accession>Q5A950</accession>
<accession>A0A1D8PS52</accession>
<accession>Q5A9F2</accession>
<accession>Q9Y752</accession>